<accession>O34852</accession>
<gene>
    <name type="primary">tcyK</name>
    <name type="synonym">ytmK</name>
    <name type="ordered locus">BSU29370</name>
</gene>
<protein>
    <recommendedName>
        <fullName>L-cystine-binding protein TcyK</fullName>
    </recommendedName>
</protein>
<proteinExistence type="evidence at protein level"/>
<evidence type="ECO:0000255" key="1">
    <source>
        <dbReference type="PROSITE-ProRule" id="PRU00303"/>
    </source>
</evidence>
<evidence type="ECO:0000269" key="2">
    <source>
    </source>
</evidence>
<evidence type="ECO:0000269" key="3">
    <source>
    </source>
</evidence>
<evidence type="ECO:0000305" key="4"/>
<evidence type="ECO:0007829" key="5">
    <source>
        <dbReference type="PDB" id="2O1M"/>
    </source>
</evidence>
<sequence length="270" mass="30241">MKTKTAFMAILFSLITVLSACGAGSQTTGAGQKKVQTITVGTGTQFPNICFIDEKGDLTGYDVELIKELDKRLPHYKFTFKTMEFSNLLVSLGQHKVDIVAHQMEKSKEREKKFLFNKVAYNHFPLKITVLQNNDTIRGIEDLKGKRVITSATSNGALVLKKWNEDNGRPFEIAYEGQGANETANQLKSGRADATISTPFAVDFQNKTSTIKEKTVGNVLSNAKVYFMFNKNEQTLSDDIDKALQEIIDDGTLKRLSLKWLGDDYSKEQY</sequence>
<comment type="function">
    <text evidence="3">Part of the ABC transporter complex TcyJKLMN involved in L-cystine import. Is also involved in cystathionine, djenkolate, and S-methylcysteine transport.</text>
</comment>
<comment type="subunit">
    <text evidence="4">The complex is composed of two ATP-binding proteins (TcyN), two transmembrane proteins (TcyL and TcyM) and two solute-binding proteins (TcyJ and TcyK).</text>
</comment>
<comment type="subcellular location">
    <subcellularLocation>
        <location evidence="4">Cell membrane</location>
        <topology evidence="4">Lipid-anchor</topology>
    </subcellularLocation>
</comment>
<comment type="induction">
    <text evidence="2">More strongly expressed in the presence of methionine than in the presence of sulfate.</text>
</comment>
<comment type="similarity">
    <text evidence="4">Belongs to the bacterial solute-binding protein 3 family.</text>
</comment>
<organism>
    <name type="scientific">Bacillus subtilis (strain 168)</name>
    <dbReference type="NCBI Taxonomy" id="224308"/>
    <lineage>
        <taxon>Bacteria</taxon>
        <taxon>Bacillati</taxon>
        <taxon>Bacillota</taxon>
        <taxon>Bacilli</taxon>
        <taxon>Bacillales</taxon>
        <taxon>Bacillaceae</taxon>
        <taxon>Bacillus</taxon>
    </lineage>
</organism>
<name>TCYK_BACSU</name>
<feature type="signal peptide" evidence="1">
    <location>
        <begin position="1"/>
        <end position="20"/>
    </location>
</feature>
<feature type="chain" id="PRO_0000031780" description="L-cystine-binding protein TcyK">
    <location>
        <begin position="21"/>
        <end position="270"/>
    </location>
</feature>
<feature type="lipid moiety-binding region" description="N-palmitoyl cysteine" evidence="1">
    <location>
        <position position="21"/>
    </location>
</feature>
<feature type="lipid moiety-binding region" description="S-diacylglycerol cysteine" evidence="1">
    <location>
        <position position="21"/>
    </location>
</feature>
<feature type="strand" evidence="5">
    <location>
        <begin position="36"/>
        <end position="42"/>
    </location>
</feature>
<feature type="strand" evidence="5">
    <location>
        <begin position="44"/>
        <end position="46"/>
    </location>
</feature>
<feature type="turn" evidence="5">
    <location>
        <begin position="47"/>
        <end position="49"/>
    </location>
</feature>
<feature type="strand" evidence="5">
    <location>
        <begin position="50"/>
        <end position="52"/>
    </location>
</feature>
<feature type="strand" evidence="5">
    <location>
        <begin position="58"/>
        <end position="60"/>
    </location>
</feature>
<feature type="helix" evidence="5">
    <location>
        <begin position="61"/>
        <end position="72"/>
    </location>
</feature>
<feature type="strand" evidence="5">
    <location>
        <begin position="76"/>
        <end position="82"/>
    </location>
</feature>
<feature type="helix" evidence="5">
    <location>
        <begin position="85"/>
        <end position="87"/>
    </location>
</feature>
<feature type="helix" evidence="5">
    <location>
        <begin position="88"/>
        <end position="93"/>
    </location>
</feature>
<feature type="strand" evidence="5">
    <location>
        <begin position="96"/>
        <end position="104"/>
    </location>
</feature>
<feature type="helix" evidence="5">
    <location>
        <begin position="108"/>
        <end position="113"/>
    </location>
</feature>
<feature type="strand" evidence="5">
    <location>
        <begin position="122"/>
        <end position="131"/>
    </location>
</feature>
<feature type="helix" evidence="5">
    <location>
        <begin position="140"/>
        <end position="142"/>
    </location>
</feature>
<feature type="strand" evidence="5">
    <location>
        <begin position="147"/>
        <end position="150"/>
    </location>
</feature>
<feature type="strand" evidence="5">
    <location>
        <begin position="152"/>
        <end position="154"/>
    </location>
</feature>
<feature type="helix" evidence="5">
    <location>
        <begin position="155"/>
        <end position="166"/>
    </location>
</feature>
<feature type="strand" evidence="5">
    <location>
        <begin position="171"/>
        <end position="175"/>
    </location>
</feature>
<feature type="helix" evidence="5">
    <location>
        <begin position="182"/>
        <end position="189"/>
    </location>
</feature>
<feature type="strand" evidence="5">
    <location>
        <begin position="193"/>
        <end position="197"/>
    </location>
</feature>
<feature type="helix" evidence="5">
    <location>
        <begin position="199"/>
        <end position="208"/>
    </location>
</feature>
<feature type="strand" evidence="5">
    <location>
        <begin position="213"/>
        <end position="229"/>
    </location>
</feature>
<feature type="helix" evidence="5">
    <location>
        <begin position="234"/>
        <end position="249"/>
    </location>
</feature>
<feature type="helix" evidence="5">
    <location>
        <begin position="252"/>
        <end position="260"/>
    </location>
</feature>
<dbReference type="EMBL" id="AF008220">
    <property type="protein sequence ID" value="AAC00326.1"/>
    <property type="molecule type" value="Genomic_DNA"/>
</dbReference>
<dbReference type="EMBL" id="AL009126">
    <property type="protein sequence ID" value="CAB14897.1"/>
    <property type="molecule type" value="Genomic_DNA"/>
</dbReference>
<dbReference type="PIR" id="E69996">
    <property type="entry name" value="E69996"/>
</dbReference>
<dbReference type="RefSeq" id="NP_390815.1">
    <property type="nucleotide sequence ID" value="NC_000964.3"/>
</dbReference>
<dbReference type="RefSeq" id="WP_004399116.1">
    <property type="nucleotide sequence ID" value="NZ_OZ025638.1"/>
</dbReference>
<dbReference type="PDB" id="2O1M">
    <property type="method" value="X-ray"/>
    <property type="resolution" value="2.00 A"/>
    <property type="chains" value="A/B=22-270"/>
</dbReference>
<dbReference type="PDBsum" id="2O1M"/>
<dbReference type="SMR" id="O34852"/>
<dbReference type="FunCoup" id="O34852">
    <property type="interactions" value="139"/>
</dbReference>
<dbReference type="STRING" id="224308.BSU29370"/>
<dbReference type="TCDB" id="3.A.1.3.13">
    <property type="family name" value="the atp-binding cassette (abc) superfamily"/>
</dbReference>
<dbReference type="PaxDb" id="224308-BSU29370"/>
<dbReference type="EnsemblBacteria" id="CAB14897">
    <property type="protein sequence ID" value="CAB14897"/>
    <property type="gene ID" value="BSU_29370"/>
</dbReference>
<dbReference type="GeneID" id="937359"/>
<dbReference type="KEGG" id="bsu:BSU29370"/>
<dbReference type="PATRIC" id="fig|224308.179.peg.3191"/>
<dbReference type="eggNOG" id="COG0834">
    <property type="taxonomic scope" value="Bacteria"/>
</dbReference>
<dbReference type="InParanoid" id="O34852"/>
<dbReference type="OrthoDB" id="8613538at2"/>
<dbReference type="PhylomeDB" id="O34852"/>
<dbReference type="BioCyc" id="BSUB:BSU29370-MONOMER"/>
<dbReference type="SABIO-RK" id="O34852"/>
<dbReference type="EvolutionaryTrace" id="O34852"/>
<dbReference type="Proteomes" id="UP000001570">
    <property type="component" value="Chromosome"/>
</dbReference>
<dbReference type="GO" id="GO:0005886">
    <property type="term" value="C:plasma membrane"/>
    <property type="evidence" value="ECO:0007669"/>
    <property type="project" value="UniProtKB-SubCell"/>
</dbReference>
<dbReference type="GO" id="GO:0006865">
    <property type="term" value="P:amino acid transport"/>
    <property type="evidence" value="ECO:0007669"/>
    <property type="project" value="UniProtKB-KW"/>
</dbReference>
<dbReference type="CDD" id="cd13710">
    <property type="entry name" value="PBP2_TcyK"/>
    <property type="match status" value="1"/>
</dbReference>
<dbReference type="Gene3D" id="3.40.190.10">
    <property type="entry name" value="Periplasmic binding protein-like II"/>
    <property type="match status" value="2"/>
</dbReference>
<dbReference type="InterPro" id="IPR001638">
    <property type="entry name" value="Solute-binding_3/MltF_N"/>
</dbReference>
<dbReference type="PANTHER" id="PTHR35936:SF18">
    <property type="entry name" value="L-CYSTINE-BINDING PROTEIN TCYJ"/>
    <property type="match status" value="1"/>
</dbReference>
<dbReference type="PANTHER" id="PTHR35936">
    <property type="entry name" value="MEMBRANE-BOUND LYTIC MUREIN TRANSGLYCOSYLASE F"/>
    <property type="match status" value="1"/>
</dbReference>
<dbReference type="Pfam" id="PF00497">
    <property type="entry name" value="SBP_bac_3"/>
    <property type="match status" value="1"/>
</dbReference>
<dbReference type="SMART" id="SM00062">
    <property type="entry name" value="PBPb"/>
    <property type="match status" value="1"/>
</dbReference>
<dbReference type="SUPFAM" id="SSF53850">
    <property type="entry name" value="Periplasmic binding protein-like II"/>
    <property type="match status" value="1"/>
</dbReference>
<dbReference type="PROSITE" id="PS51257">
    <property type="entry name" value="PROKAR_LIPOPROTEIN"/>
    <property type="match status" value="1"/>
</dbReference>
<keyword id="KW-0002">3D-structure</keyword>
<keyword id="KW-0029">Amino-acid transport</keyword>
<keyword id="KW-1003">Cell membrane</keyword>
<keyword id="KW-0449">Lipoprotein</keyword>
<keyword id="KW-0472">Membrane</keyword>
<keyword id="KW-0564">Palmitate</keyword>
<keyword id="KW-1185">Reference proteome</keyword>
<keyword id="KW-0732">Signal</keyword>
<keyword id="KW-0813">Transport</keyword>
<reference key="1">
    <citation type="journal article" date="1997" name="Microbiology">
        <title>Sequencing and functional annotation of the Bacillus subtilis genes in the 200 kb rrnB-dnaB region.</title>
        <authorList>
            <person name="Lapidus A."/>
            <person name="Galleron N."/>
            <person name="Sorokin A."/>
            <person name="Ehrlich S.D."/>
        </authorList>
    </citation>
    <scope>NUCLEOTIDE SEQUENCE [GENOMIC DNA]</scope>
    <source>
        <strain>168</strain>
    </source>
</reference>
<reference key="2">
    <citation type="journal article" date="1997" name="Nature">
        <title>The complete genome sequence of the Gram-positive bacterium Bacillus subtilis.</title>
        <authorList>
            <person name="Kunst F."/>
            <person name="Ogasawara N."/>
            <person name="Moszer I."/>
            <person name="Albertini A.M."/>
            <person name="Alloni G."/>
            <person name="Azevedo V."/>
            <person name="Bertero M.G."/>
            <person name="Bessieres P."/>
            <person name="Bolotin A."/>
            <person name="Borchert S."/>
            <person name="Borriss R."/>
            <person name="Boursier L."/>
            <person name="Brans A."/>
            <person name="Braun M."/>
            <person name="Brignell S.C."/>
            <person name="Bron S."/>
            <person name="Brouillet S."/>
            <person name="Bruschi C.V."/>
            <person name="Caldwell B."/>
            <person name="Capuano V."/>
            <person name="Carter N.M."/>
            <person name="Choi S.-K."/>
            <person name="Codani J.-J."/>
            <person name="Connerton I.F."/>
            <person name="Cummings N.J."/>
            <person name="Daniel R.A."/>
            <person name="Denizot F."/>
            <person name="Devine K.M."/>
            <person name="Duesterhoeft A."/>
            <person name="Ehrlich S.D."/>
            <person name="Emmerson P.T."/>
            <person name="Entian K.-D."/>
            <person name="Errington J."/>
            <person name="Fabret C."/>
            <person name="Ferrari E."/>
            <person name="Foulger D."/>
            <person name="Fritz C."/>
            <person name="Fujita M."/>
            <person name="Fujita Y."/>
            <person name="Fuma S."/>
            <person name="Galizzi A."/>
            <person name="Galleron N."/>
            <person name="Ghim S.-Y."/>
            <person name="Glaser P."/>
            <person name="Goffeau A."/>
            <person name="Golightly E.J."/>
            <person name="Grandi G."/>
            <person name="Guiseppi G."/>
            <person name="Guy B.J."/>
            <person name="Haga K."/>
            <person name="Haiech J."/>
            <person name="Harwood C.R."/>
            <person name="Henaut A."/>
            <person name="Hilbert H."/>
            <person name="Holsappel S."/>
            <person name="Hosono S."/>
            <person name="Hullo M.-F."/>
            <person name="Itaya M."/>
            <person name="Jones L.-M."/>
            <person name="Joris B."/>
            <person name="Karamata D."/>
            <person name="Kasahara Y."/>
            <person name="Klaerr-Blanchard M."/>
            <person name="Klein C."/>
            <person name="Kobayashi Y."/>
            <person name="Koetter P."/>
            <person name="Koningstein G."/>
            <person name="Krogh S."/>
            <person name="Kumano M."/>
            <person name="Kurita K."/>
            <person name="Lapidus A."/>
            <person name="Lardinois S."/>
            <person name="Lauber J."/>
            <person name="Lazarevic V."/>
            <person name="Lee S.-M."/>
            <person name="Levine A."/>
            <person name="Liu H."/>
            <person name="Masuda S."/>
            <person name="Mauel C."/>
            <person name="Medigue C."/>
            <person name="Medina N."/>
            <person name="Mellado R.P."/>
            <person name="Mizuno M."/>
            <person name="Moestl D."/>
            <person name="Nakai S."/>
            <person name="Noback M."/>
            <person name="Noone D."/>
            <person name="O'Reilly M."/>
            <person name="Ogawa K."/>
            <person name="Ogiwara A."/>
            <person name="Oudega B."/>
            <person name="Park S.-H."/>
            <person name="Parro V."/>
            <person name="Pohl T.M."/>
            <person name="Portetelle D."/>
            <person name="Porwollik S."/>
            <person name="Prescott A.M."/>
            <person name="Presecan E."/>
            <person name="Pujic P."/>
            <person name="Purnelle B."/>
            <person name="Rapoport G."/>
            <person name="Rey M."/>
            <person name="Reynolds S."/>
            <person name="Rieger M."/>
            <person name="Rivolta C."/>
            <person name="Rocha E."/>
            <person name="Roche B."/>
            <person name="Rose M."/>
            <person name="Sadaie Y."/>
            <person name="Sato T."/>
            <person name="Scanlan E."/>
            <person name="Schleich S."/>
            <person name="Schroeter R."/>
            <person name="Scoffone F."/>
            <person name="Sekiguchi J."/>
            <person name="Sekowska A."/>
            <person name="Seror S.J."/>
            <person name="Serror P."/>
            <person name="Shin B.-S."/>
            <person name="Soldo B."/>
            <person name="Sorokin A."/>
            <person name="Tacconi E."/>
            <person name="Takagi T."/>
            <person name="Takahashi H."/>
            <person name="Takemaru K."/>
            <person name="Takeuchi M."/>
            <person name="Tamakoshi A."/>
            <person name="Tanaka T."/>
            <person name="Terpstra P."/>
            <person name="Tognoni A."/>
            <person name="Tosato V."/>
            <person name="Uchiyama S."/>
            <person name="Vandenbol M."/>
            <person name="Vannier F."/>
            <person name="Vassarotti A."/>
            <person name="Viari A."/>
            <person name="Wambutt R."/>
            <person name="Wedler E."/>
            <person name="Wedler H."/>
            <person name="Weitzenegger T."/>
            <person name="Winters P."/>
            <person name="Wipat A."/>
            <person name="Yamamoto H."/>
            <person name="Yamane K."/>
            <person name="Yasumoto K."/>
            <person name="Yata K."/>
            <person name="Yoshida K."/>
            <person name="Yoshikawa H.-F."/>
            <person name="Zumstein E."/>
            <person name="Yoshikawa H."/>
            <person name="Danchin A."/>
        </authorList>
    </citation>
    <scope>NUCLEOTIDE SEQUENCE [LARGE SCALE GENOMIC DNA]</scope>
    <source>
        <strain>168</strain>
    </source>
</reference>
<reference key="3">
    <citation type="journal article" date="2002" name="J. Bacteriol.">
        <title>Global expression profile of Bacillus subtilis grown in the presence of sulfate or methionine.</title>
        <authorList>
            <person name="Auger S."/>
            <person name="Danchin A."/>
            <person name="Martin-Verstraete I."/>
        </authorList>
    </citation>
    <scope>INDUCTION</scope>
    <source>
        <strain>168</strain>
    </source>
</reference>
<reference key="4">
    <citation type="journal article" date="2004" name="J. Bacteriol.">
        <title>Three different systems participate in L-cystine uptake in Bacillus subtilis.</title>
        <authorList>
            <person name="Burguiere P."/>
            <person name="Auger S."/>
            <person name="Hullo M.-F."/>
            <person name="Danchin A."/>
            <person name="Martin-Verstraete I."/>
        </authorList>
    </citation>
    <scope>FUNCTION IN L-CYSTINE TRANSPORT</scope>
    <source>
        <strain>168</strain>
    </source>
</reference>